<evidence type="ECO:0000255" key="1">
    <source>
        <dbReference type="HAMAP-Rule" id="MF_01458"/>
    </source>
</evidence>
<keyword id="KW-0067">ATP-binding</keyword>
<keyword id="KW-0378">Hydrolase</keyword>
<keyword id="KW-0472">Membrane</keyword>
<keyword id="KW-0479">Metal-binding</keyword>
<keyword id="KW-0482">Metalloprotease</keyword>
<keyword id="KW-0547">Nucleotide-binding</keyword>
<keyword id="KW-0614">Plasmid</keyword>
<keyword id="KW-0645">Protease</keyword>
<keyword id="KW-1185">Reference proteome</keyword>
<keyword id="KW-0793">Thylakoid</keyword>
<keyword id="KW-0812">Transmembrane</keyword>
<keyword id="KW-1133">Transmembrane helix</keyword>
<keyword id="KW-0862">Zinc</keyword>
<name>FTSH_ACAM1</name>
<accession>A8ZNZ4</accession>
<geneLocation type="plasmid">
    <name>pREB4</name>
</geneLocation>
<dbReference type="EC" id="3.4.24.-" evidence="1"/>
<dbReference type="EMBL" id="CP000841">
    <property type="protein sequence ID" value="ABW32730.1"/>
    <property type="molecule type" value="Genomic_DNA"/>
</dbReference>
<dbReference type="RefSeq" id="WP_012167661.1">
    <property type="nucleotide sequence ID" value="NC_009929.1"/>
</dbReference>
<dbReference type="SMR" id="A8ZNZ4"/>
<dbReference type="KEGG" id="amr:AM1_D0237"/>
<dbReference type="HOGENOM" id="CLU_000688_16_2_3"/>
<dbReference type="OrthoDB" id="523653at2"/>
<dbReference type="Proteomes" id="UP000000268">
    <property type="component" value="Plasmid pREB4"/>
</dbReference>
<dbReference type="GO" id="GO:0031676">
    <property type="term" value="C:plasma membrane-derived thylakoid membrane"/>
    <property type="evidence" value="ECO:0007669"/>
    <property type="project" value="UniProtKB-SubCell"/>
</dbReference>
<dbReference type="GO" id="GO:0005524">
    <property type="term" value="F:ATP binding"/>
    <property type="evidence" value="ECO:0007669"/>
    <property type="project" value="UniProtKB-UniRule"/>
</dbReference>
<dbReference type="GO" id="GO:0016887">
    <property type="term" value="F:ATP hydrolysis activity"/>
    <property type="evidence" value="ECO:0007669"/>
    <property type="project" value="UniProtKB-UniRule"/>
</dbReference>
<dbReference type="GO" id="GO:0004176">
    <property type="term" value="F:ATP-dependent peptidase activity"/>
    <property type="evidence" value="ECO:0007669"/>
    <property type="project" value="InterPro"/>
</dbReference>
<dbReference type="GO" id="GO:0004222">
    <property type="term" value="F:metalloendopeptidase activity"/>
    <property type="evidence" value="ECO:0007669"/>
    <property type="project" value="InterPro"/>
</dbReference>
<dbReference type="GO" id="GO:0008270">
    <property type="term" value="F:zinc ion binding"/>
    <property type="evidence" value="ECO:0007669"/>
    <property type="project" value="UniProtKB-UniRule"/>
</dbReference>
<dbReference type="GO" id="GO:0030163">
    <property type="term" value="P:protein catabolic process"/>
    <property type="evidence" value="ECO:0007669"/>
    <property type="project" value="UniProtKB-UniRule"/>
</dbReference>
<dbReference type="GO" id="GO:0006508">
    <property type="term" value="P:proteolysis"/>
    <property type="evidence" value="ECO:0007669"/>
    <property type="project" value="UniProtKB-KW"/>
</dbReference>
<dbReference type="CDD" id="cd19501">
    <property type="entry name" value="RecA-like_FtsH"/>
    <property type="match status" value="1"/>
</dbReference>
<dbReference type="FunFam" id="1.10.8.60:FF:000001">
    <property type="entry name" value="ATP-dependent zinc metalloprotease FtsH"/>
    <property type="match status" value="1"/>
</dbReference>
<dbReference type="FunFam" id="1.20.58.760:FF:000001">
    <property type="entry name" value="ATP-dependent zinc metalloprotease FtsH"/>
    <property type="match status" value="1"/>
</dbReference>
<dbReference type="FunFam" id="3.40.50.300:FF:000001">
    <property type="entry name" value="ATP-dependent zinc metalloprotease FtsH"/>
    <property type="match status" value="1"/>
</dbReference>
<dbReference type="Gene3D" id="1.10.8.60">
    <property type="match status" value="1"/>
</dbReference>
<dbReference type="Gene3D" id="3.30.720.210">
    <property type="match status" value="1"/>
</dbReference>
<dbReference type="Gene3D" id="3.40.50.300">
    <property type="entry name" value="P-loop containing nucleotide triphosphate hydrolases"/>
    <property type="match status" value="1"/>
</dbReference>
<dbReference type="Gene3D" id="1.20.58.760">
    <property type="entry name" value="Peptidase M41"/>
    <property type="match status" value="1"/>
</dbReference>
<dbReference type="HAMAP" id="MF_01458">
    <property type="entry name" value="FtsH"/>
    <property type="match status" value="1"/>
</dbReference>
<dbReference type="InterPro" id="IPR003593">
    <property type="entry name" value="AAA+_ATPase"/>
</dbReference>
<dbReference type="InterPro" id="IPR041569">
    <property type="entry name" value="AAA_lid_3"/>
</dbReference>
<dbReference type="InterPro" id="IPR003959">
    <property type="entry name" value="ATPase_AAA_core"/>
</dbReference>
<dbReference type="InterPro" id="IPR003960">
    <property type="entry name" value="ATPase_AAA_CS"/>
</dbReference>
<dbReference type="InterPro" id="IPR005936">
    <property type="entry name" value="FtsH"/>
</dbReference>
<dbReference type="InterPro" id="IPR027417">
    <property type="entry name" value="P-loop_NTPase"/>
</dbReference>
<dbReference type="InterPro" id="IPR011546">
    <property type="entry name" value="Pept_M41_FtsH_extracell"/>
</dbReference>
<dbReference type="InterPro" id="IPR000642">
    <property type="entry name" value="Peptidase_M41"/>
</dbReference>
<dbReference type="InterPro" id="IPR037219">
    <property type="entry name" value="Peptidase_M41-like"/>
</dbReference>
<dbReference type="NCBIfam" id="TIGR01241">
    <property type="entry name" value="FtsH_fam"/>
    <property type="match status" value="1"/>
</dbReference>
<dbReference type="PANTHER" id="PTHR23076:SF113">
    <property type="entry name" value="ATP-DEPENDENT ZINC METALLOPROTEASE FTSH 1, CHLOROPLASTIC-RELATED"/>
    <property type="match status" value="1"/>
</dbReference>
<dbReference type="PANTHER" id="PTHR23076">
    <property type="entry name" value="METALLOPROTEASE M41 FTSH"/>
    <property type="match status" value="1"/>
</dbReference>
<dbReference type="Pfam" id="PF00004">
    <property type="entry name" value="AAA"/>
    <property type="match status" value="1"/>
</dbReference>
<dbReference type="Pfam" id="PF17862">
    <property type="entry name" value="AAA_lid_3"/>
    <property type="match status" value="1"/>
</dbReference>
<dbReference type="Pfam" id="PF06480">
    <property type="entry name" value="FtsH_ext"/>
    <property type="match status" value="1"/>
</dbReference>
<dbReference type="Pfam" id="PF01434">
    <property type="entry name" value="Peptidase_M41"/>
    <property type="match status" value="1"/>
</dbReference>
<dbReference type="SMART" id="SM00382">
    <property type="entry name" value="AAA"/>
    <property type="match status" value="1"/>
</dbReference>
<dbReference type="SUPFAM" id="SSF140990">
    <property type="entry name" value="FtsH protease domain-like"/>
    <property type="match status" value="1"/>
</dbReference>
<dbReference type="SUPFAM" id="SSF52540">
    <property type="entry name" value="P-loop containing nucleoside triphosphate hydrolases"/>
    <property type="match status" value="1"/>
</dbReference>
<dbReference type="PROSITE" id="PS00674">
    <property type="entry name" value="AAA"/>
    <property type="match status" value="1"/>
</dbReference>
<gene>
    <name evidence="1" type="primary">ftsH</name>
    <name type="ordered locus">AM1_D0237</name>
</gene>
<protein>
    <recommendedName>
        <fullName evidence="1">ATP-dependent zinc metalloprotease FtsH</fullName>
        <ecNumber evidence="1">3.4.24.-</ecNumber>
    </recommendedName>
</protein>
<organism>
    <name type="scientific">Acaryochloris marina (strain MBIC 11017)</name>
    <dbReference type="NCBI Taxonomy" id="329726"/>
    <lineage>
        <taxon>Bacteria</taxon>
        <taxon>Bacillati</taxon>
        <taxon>Cyanobacteriota</taxon>
        <taxon>Cyanophyceae</taxon>
        <taxon>Acaryochloridales</taxon>
        <taxon>Acaryochloridaceae</taxon>
        <taxon>Acaryochloris</taxon>
    </lineage>
</organism>
<reference key="1">
    <citation type="journal article" date="2008" name="Proc. Natl. Acad. Sci. U.S.A.">
        <title>Niche adaptation and genome expansion in the chlorophyll d-producing cyanobacterium Acaryochloris marina.</title>
        <authorList>
            <person name="Swingley W.D."/>
            <person name="Chen M."/>
            <person name="Cheung P.C."/>
            <person name="Conrad A.L."/>
            <person name="Dejesa L.C."/>
            <person name="Hao J."/>
            <person name="Honchak B.M."/>
            <person name="Karbach L.E."/>
            <person name="Kurdoglu A."/>
            <person name="Lahiri S."/>
            <person name="Mastrian S.D."/>
            <person name="Miyashita H."/>
            <person name="Page L."/>
            <person name="Ramakrishna P."/>
            <person name="Satoh S."/>
            <person name="Sattley W.M."/>
            <person name="Shimada Y."/>
            <person name="Taylor H.L."/>
            <person name="Tomo T."/>
            <person name="Tsuchiya T."/>
            <person name="Wang Z.T."/>
            <person name="Raymond J."/>
            <person name="Mimuro M."/>
            <person name="Blankenship R.E."/>
            <person name="Touchman J.W."/>
        </authorList>
    </citation>
    <scope>NUCLEOTIDE SEQUENCE [LARGE SCALE GENOMIC DNA]</scope>
    <source>
        <strain>MBIC 11017</strain>
    </source>
</reference>
<proteinExistence type="inferred from homology"/>
<feature type="chain" id="PRO_0000400317" description="ATP-dependent zinc metalloprotease FtsH">
    <location>
        <begin position="1"/>
        <end position="655"/>
    </location>
</feature>
<feature type="topological domain" description="Cytoplasmic" evidence="1">
    <location>
        <begin position="1"/>
        <end position="17"/>
    </location>
</feature>
<feature type="transmembrane region" description="Helical" evidence="1">
    <location>
        <begin position="18"/>
        <end position="38"/>
    </location>
</feature>
<feature type="topological domain" description="Lumenal" evidence="1">
    <location>
        <begin position="39"/>
        <end position="124"/>
    </location>
</feature>
<feature type="transmembrane region" description="Helical" evidence="1">
    <location>
        <begin position="125"/>
        <end position="145"/>
    </location>
</feature>
<feature type="topological domain" description="Cytoplasmic" evidence="1">
    <location>
        <begin position="146"/>
        <end position="655"/>
    </location>
</feature>
<feature type="active site" evidence="1">
    <location>
        <position position="441"/>
    </location>
</feature>
<feature type="binding site" evidence="1">
    <location>
        <begin position="216"/>
        <end position="223"/>
    </location>
    <ligand>
        <name>ATP</name>
        <dbReference type="ChEBI" id="CHEBI:30616"/>
    </ligand>
</feature>
<feature type="binding site" evidence="1">
    <location>
        <position position="440"/>
    </location>
    <ligand>
        <name>Zn(2+)</name>
        <dbReference type="ChEBI" id="CHEBI:29105"/>
        <note>catalytic</note>
    </ligand>
</feature>
<feature type="binding site" evidence="1">
    <location>
        <position position="444"/>
    </location>
    <ligand>
        <name>Zn(2+)</name>
        <dbReference type="ChEBI" id="CHEBI:29105"/>
        <note>catalytic</note>
    </ligand>
</feature>
<feature type="binding site" evidence="1">
    <location>
        <position position="517"/>
    </location>
    <ligand>
        <name>Zn(2+)</name>
        <dbReference type="ChEBI" id="CHEBI:29105"/>
        <note>catalytic</note>
    </ligand>
</feature>
<comment type="function">
    <text evidence="1">Acts as a processive, ATP-dependent zinc metallopeptidase for both cytoplasmic and membrane proteins. Plays a role in the quality control of integral membrane proteins.</text>
</comment>
<comment type="cofactor">
    <cofactor evidence="1">
        <name>Zn(2+)</name>
        <dbReference type="ChEBI" id="CHEBI:29105"/>
    </cofactor>
    <text evidence="1">Binds 1 zinc ion per subunit.</text>
</comment>
<comment type="subunit">
    <text evidence="1">Homohexamer.</text>
</comment>
<comment type="subcellular location">
    <subcellularLocation>
        <location evidence="1">Cellular thylakoid membrane</location>
        <topology evidence="1">Multi-pass membrane protein</topology>
        <orientation evidence="1">Stromal side</orientation>
    </subcellularLocation>
</comment>
<comment type="similarity">
    <text evidence="1">In the central section; belongs to the AAA ATPase family.</text>
</comment>
<comment type="similarity">
    <text evidence="1">In the C-terminal section; belongs to the peptidase M41 family.</text>
</comment>
<sequence>MPIETEPNRTRKNFEPKRFGGSLFILFTLLLFLNLFVLRGPRFPITAYSDFITQVEAGQVERVEVRPDRIRYILKSDQYGFNEGTETAAVFDTVPVGIDLELPKFLREHDVQYFAPPPSSLSWLPTLLGWVVPPLIFFGIWSWLINRNQGAGPAALTVGQSKARIYSEGSTGVTFDDVAGVEEAKTELLEIVDFLAHADKYTRLGAKIPKGVLLVGPPGTGKTLLAKAIAGEAKVPFFSISGSEFIELFVGIGAARVRDLFEQAKQQAPCIVFIDELDALGKARGGPGGFTGGNDEREQTLNQLLSEMDGFDPNVGVILLAATNRPEVLDPALLRPGRFDRQIVVDRPDKMGREAILKVHVRGVKLAEDINLTKLAVRTPGFSGADLANLVNEAALLAARQSRDAVVMSDFNEAIERVVAGLEKKSRVLNDLEKKTVAYHEVGHAIVGSLMPGAGTVEKISVIPRGIGALGYTLQLPEEDRFLITASELRGRIATLLGGRSAEELIFGVVSTGASDDIQKATDLAERYVTLYGMSDELGPIAYEKAQQQFLEGVPNPRRTVGPQVVEAIDQAVKDVVDGAHHMALSILSINQDMLQLTASHLLEKEVLESQELHSLLSQPQFPPDMDEWLQTGKLPQGKELIQTTLNSHQLIGIN</sequence>